<feature type="chain" id="PRO_0000366832" description="Ribosomal RNA large subunit methyltransferase K/L">
    <location>
        <begin position="1"/>
        <end position="713"/>
    </location>
</feature>
<feature type="domain" description="THUMP" evidence="1">
    <location>
        <begin position="43"/>
        <end position="154"/>
    </location>
</feature>
<evidence type="ECO:0000255" key="1">
    <source>
        <dbReference type="HAMAP-Rule" id="MF_01858"/>
    </source>
</evidence>
<accession>Q0HJZ9</accession>
<proteinExistence type="inferred from homology"/>
<reference key="1">
    <citation type="submission" date="2006-08" db="EMBL/GenBank/DDBJ databases">
        <title>Complete sequence of Shewanella sp. MR-4.</title>
        <authorList>
            <consortium name="US DOE Joint Genome Institute"/>
            <person name="Copeland A."/>
            <person name="Lucas S."/>
            <person name="Lapidus A."/>
            <person name="Barry K."/>
            <person name="Detter J.C."/>
            <person name="Glavina del Rio T."/>
            <person name="Hammon N."/>
            <person name="Israni S."/>
            <person name="Dalin E."/>
            <person name="Tice H."/>
            <person name="Pitluck S."/>
            <person name="Kiss H."/>
            <person name="Brettin T."/>
            <person name="Bruce D."/>
            <person name="Han C."/>
            <person name="Tapia R."/>
            <person name="Gilna P."/>
            <person name="Schmutz J."/>
            <person name="Larimer F."/>
            <person name="Land M."/>
            <person name="Hauser L."/>
            <person name="Kyrpides N."/>
            <person name="Mikhailova N."/>
            <person name="Nealson K."/>
            <person name="Konstantinidis K."/>
            <person name="Klappenbach J."/>
            <person name="Tiedje J."/>
            <person name="Richardson P."/>
        </authorList>
    </citation>
    <scope>NUCLEOTIDE SEQUENCE [LARGE SCALE GENOMIC DNA]</scope>
    <source>
        <strain>MR-4</strain>
    </source>
</reference>
<keyword id="KW-0963">Cytoplasm</keyword>
<keyword id="KW-0489">Methyltransferase</keyword>
<keyword id="KW-0694">RNA-binding</keyword>
<keyword id="KW-0698">rRNA processing</keyword>
<keyword id="KW-0949">S-adenosyl-L-methionine</keyword>
<keyword id="KW-0808">Transferase</keyword>
<organism>
    <name type="scientific">Shewanella sp. (strain MR-4)</name>
    <dbReference type="NCBI Taxonomy" id="60480"/>
    <lineage>
        <taxon>Bacteria</taxon>
        <taxon>Pseudomonadati</taxon>
        <taxon>Pseudomonadota</taxon>
        <taxon>Gammaproteobacteria</taxon>
        <taxon>Alteromonadales</taxon>
        <taxon>Shewanellaceae</taxon>
        <taxon>Shewanella</taxon>
    </lineage>
</organism>
<comment type="function">
    <text evidence="1">Specifically methylates the guanine in position 2445 (m2G2445) and the guanine in position 2069 (m7G2069) of 23S rRNA.</text>
</comment>
<comment type="catalytic activity">
    <reaction evidence="1">
        <text>guanosine(2445) in 23S rRNA + S-adenosyl-L-methionine = N(2)-methylguanosine(2445) in 23S rRNA + S-adenosyl-L-homocysteine + H(+)</text>
        <dbReference type="Rhea" id="RHEA:42740"/>
        <dbReference type="Rhea" id="RHEA-COMP:10215"/>
        <dbReference type="Rhea" id="RHEA-COMP:10216"/>
        <dbReference type="ChEBI" id="CHEBI:15378"/>
        <dbReference type="ChEBI" id="CHEBI:57856"/>
        <dbReference type="ChEBI" id="CHEBI:59789"/>
        <dbReference type="ChEBI" id="CHEBI:74269"/>
        <dbReference type="ChEBI" id="CHEBI:74481"/>
        <dbReference type="EC" id="2.1.1.173"/>
    </reaction>
</comment>
<comment type="catalytic activity">
    <reaction evidence="1">
        <text>guanosine(2069) in 23S rRNA + S-adenosyl-L-methionine = N(2)-methylguanosine(2069) in 23S rRNA + S-adenosyl-L-homocysteine + H(+)</text>
        <dbReference type="Rhea" id="RHEA:43772"/>
        <dbReference type="Rhea" id="RHEA-COMP:10688"/>
        <dbReference type="Rhea" id="RHEA-COMP:10689"/>
        <dbReference type="ChEBI" id="CHEBI:15378"/>
        <dbReference type="ChEBI" id="CHEBI:57856"/>
        <dbReference type="ChEBI" id="CHEBI:59789"/>
        <dbReference type="ChEBI" id="CHEBI:74269"/>
        <dbReference type="ChEBI" id="CHEBI:74481"/>
        <dbReference type="EC" id="2.1.1.264"/>
    </reaction>
</comment>
<comment type="subcellular location">
    <subcellularLocation>
        <location evidence="1">Cytoplasm</location>
    </subcellularLocation>
</comment>
<comment type="similarity">
    <text evidence="1">Belongs to the methyltransferase superfamily. RlmKL family.</text>
</comment>
<name>RLMKL_SHESM</name>
<protein>
    <recommendedName>
        <fullName evidence="1">Ribosomal RNA large subunit methyltransferase K/L</fullName>
    </recommendedName>
    <domain>
        <recommendedName>
            <fullName evidence="1">23S rRNA m2G2445 methyltransferase</fullName>
            <ecNumber evidence="1">2.1.1.173</ecNumber>
        </recommendedName>
        <alternativeName>
            <fullName evidence="1">rRNA (guanine-N(2)-)-methyltransferase RlmL</fullName>
        </alternativeName>
    </domain>
    <domain>
        <recommendedName>
            <fullName evidence="1">23S rRNA m7G2069 methyltransferase</fullName>
            <ecNumber evidence="1">2.1.1.264</ecNumber>
        </recommendedName>
        <alternativeName>
            <fullName evidence="1">rRNA (guanine-N(7)-)-methyltransferase RlmK</fullName>
        </alternativeName>
    </domain>
</protein>
<sequence>MLNFFAAAPKGFEYSLAQELTEFGATEIKESVAGVYFTAPLALAYRITLWTRLASRIVLVIYKGPCESAEQLYNAAYCIDWSSHFSNRNTFSIDFHGTGGFINNTQFGALKIKDAIVDRFRDDGDARPNVARIDADIKIDAHFRNGVITIAMNFSGPSLHQRGYRSTTGEAPLKENLAANMLVRSGWKAAPTTLLDPFCGSGTVLIEAALMAADIAPGLQRSRFGFEHWRRHDKATWHEILEEAKARASLGVKRCDVKFYGSDIDSRLVALAKRNAQNAGVLELIDFKVANALNVEPPAGEGYLITNPPYGERLGSVSELLQLYYQLGDKFKKEFGGWKVAMLCSDIELISALKLKADKQMKMFNGALECAFNLYTLHAQSTRRDTPVLPEGVDIADIAPAFANRIKKNAKQLEKWAKKEGIDSYRLYDADIPEYNVAVDRYLDHIVVQEYMAPASIPEAVTKRRLSDVLLALPAAIGVDPHKITMKTRERQKGTNQYQKLDERKLELITTEYGAKFKLNLTGYLDTGLFLDHRLTRRLVGQKSKGRRVLNLFSYTGSASVHAALGGAKSVTTVDMSNTYLAWAKENFALNDLSGKQYEFVQADCLQWIRDSALDKSAQYDLIFIDPPTFSNSKRMEDSFDVQRDHVNLLGMLIKLLSPNGEIVFSNNKRKFKMDTETLAKMKIKVENIDDLTLPMDYKRNPHIHNTWLITHA</sequence>
<gene>
    <name evidence="1" type="primary">rlmL</name>
    <name type="ordered locus">Shewmr4_1540</name>
</gene>
<dbReference type="EC" id="2.1.1.173" evidence="1"/>
<dbReference type="EC" id="2.1.1.264" evidence="1"/>
<dbReference type="EMBL" id="CP000446">
    <property type="protein sequence ID" value="ABI38618.1"/>
    <property type="molecule type" value="Genomic_DNA"/>
</dbReference>
<dbReference type="RefSeq" id="WP_011622322.1">
    <property type="nucleotide sequence ID" value="NC_008321.1"/>
</dbReference>
<dbReference type="SMR" id="Q0HJZ9"/>
<dbReference type="KEGG" id="she:Shewmr4_1540"/>
<dbReference type="HOGENOM" id="CLU_014042_2_0_6"/>
<dbReference type="GO" id="GO:0005737">
    <property type="term" value="C:cytoplasm"/>
    <property type="evidence" value="ECO:0007669"/>
    <property type="project" value="UniProtKB-SubCell"/>
</dbReference>
<dbReference type="GO" id="GO:0052915">
    <property type="term" value="F:23S rRNA (guanine(2445)-N(2))-methyltransferase activity"/>
    <property type="evidence" value="ECO:0007669"/>
    <property type="project" value="UniProtKB-UniRule"/>
</dbReference>
<dbReference type="GO" id="GO:0003723">
    <property type="term" value="F:RNA binding"/>
    <property type="evidence" value="ECO:0007669"/>
    <property type="project" value="UniProtKB-KW"/>
</dbReference>
<dbReference type="GO" id="GO:0070043">
    <property type="term" value="F:rRNA (guanine-N7-)-methyltransferase activity"/>
    <property type="evidence" value="ECO:0007669"/>
    <property type="project" value="UniProtKB-UniRule"/>
</dbReference>
<dbReference type="CDD" id="cd02440">
    <property type="entry name" value="AdoMet_MTases"/>
    <property type="match status" value="1"/>
</dbReference>
<dbReference type="CDD" id="cd11715">
    <property type="entry name" value="THUMP_AdoMetMT"/>
    <property type="match status" value="1"/>
</dbReference>
<dbReference type="FunFam" id="3.40.50.150:FF:000039">
    <property type="entry name" value="Ribosomal RNA large subunit methyltransferase K/L"/>
    <property type="match status" value="1"/>
</dbReference>
<dbReference type="Gene3D" id="3.30.2130.30">
    <property type="match status" value="1"/>
</dbReference>
<dbReference type="Gene3D" id="3.30.750.80">
    <property type="entry name" value="RNA methyltransferase domain (HRMD) like"/>
    <property type="match status" value="1"/>
</dbReference>
<dbReference type="Gene3D" id="3.40.50.150">
    <property type="entry name" value="Vaccinia Virus protein VP39"/>
    <property type="match status" value="2"/>
</dbReference>
<dbReference type="HAMAP" id="MF_01858">
    <property type="entry name" value="23SrRNA_methyltr_KL"/>
    <property type="match status" value="1"/>
</dbReference>
<dbReference type="InterPro" id="IPR017244">
    <property type="entry name" value="23SrRNA_methyltr_KL"/>
</dbReference>
<dbReference type="InterPro" id="IPR000241">
    <property type="entry name" value="RlmKL-like_Mtase"/>
</dbReference>
<dbReference type="InterPro" id="IPR053943">
    <property type="entry name" value="RlmKL-like_Mtase_CS"/>
</dbReference>
<dbReference type="InterPro" id="IPR054170">
    <property type="entry name" value="RlmL_1st"/>
</dbReference>
<dbReference type="InterPro" id="IPR019614">
    <property type="entry name" value="SAM-dep_methyl-trfase"/>
</dbReference>
<dbReference type="InterPro" id="IPR029063">
    <property type="entry name" value="SAM-dependent_MTases_sf"/>
</dbReference>
<dbReference type="InterPro" id="IPR004114">
    <property type="entry name" value="THUMP_dom"/>
</dbReference>
<dbReference type="NCBIfam" id="NF008748">
    <property type="entry name" value="PRK11783.1"/>
    <property type="match status" value="1"/>
</dbReference>
<dbReference type="PANTHER" id="PTHR47313">
    <property type="entry name" value="RIBOSOMAL RNA LARGE SUBUNIT METHYLTRANSFERASE K/L"/>
    <property type="match status" value="1"/>
</dbReference>
<dbReference type="PANTHER" id="PTHR47313:SF1">
    <property type="entry name" value="RIBOSOMAL RNA LARGE SUBUNIT METHYLTRANSFERASE K_L"/>
    <property type="match status" value="1"/>
</dbReference>
<dbReference type="Pfam" id="PF10672">
    <property type="entry name" value="Methyltrans_SAM"/>
    <property type="match status" value="1"/>
</dbReference>
<dbReference type="Pfam" id="PF22020">
    <property type="entry name" value="RlmL_1st"/>
    <property type="match status" value="1"/>
</dbReference>
<dbReference type="Pfam" id="PF02926">
    <property type="entry name" value="THUMP"/>
    <property type="match status" value="1"/>
</dbReference>
<dbReference type="Pfam" id="PF01170">
    <property type="entry name" value="UPF0020"/>
    <property type="match status" value="1"/>
</dbReference>
<dbReference type="PIRSF" id="PIRSF037618">
    <property type="entry name" value="RNA_Mtase_bacteria_prd"/>
    <property type="match status" value="1"/>
</dbReference>
<dbReference type="SMART" id="SM00981">
    <property type="entry name" value="THUMP"/>
    <property type="match status" value="1"/>
</dbReference>
<dbReference type="SUPFAM" id="SSF53335">
    <property type="entry name" value="S-adenosyl-L-methionine-dependent methyltransferases"/>
    <property type="match status" value="2"/>
</dbReference>
<dbReference type="PROSITE" id="PS51165">
    <property type="entry name" value="THUMP"/>
    <property type="match status" value="1"/>
</dbReference>
<dbReference type="PROSITE" id="PS01261">
    <property type="entry name" value="UPF0020"/>
    <property type="match status" value="1"/>
</dbReference>